<gene>
    <name type="primary">Kcnj5</name>
    <name type="synonym">Girk4</name>
</gene>
<accession>P48548</accession>
<proteinExistence type="evidence at protein level"/>
<keyword id="KW-0903">Direct protein sequencing</keyword>
<keyword id="KW-0407">Ion channel</keyword>
<keyword id="KW-0406">Ion transport</keyword>
<keyword id="KW-0472">Membrane</keyword>
<keyword id="KW-0597">Phosphoprotein</keyword>
<keyword id="KW-0630">Potassium</keyword>
<keyword id="KW-0633">Potassium transport</keyword>
<keyword id="KW-1185">Reference proteome</keyword>
<keyword id="KW-0812">Transmembrane</keyword>
<keyword id="KW-1133">Transmembrane helix</keyword>
<keyword id="KW-0813">Transport</keyword>
<keyword id="KW-0851">Voltage-gated channel</keyword>
<comment type="function">
    <text evidence="5 6 8">Inward rectifier potassium channels are characterized by a greater tendency to allow potassium to flow into the cell rather than out of it. Their voltage dependence is regulated by the concentration of extracellular potassium; as external potassium is raised, the voltage range of the channel opening shifts to more positive voltages. The inward rectification is mainly due to the blockage of outward current by internal magnesium. Can be blocked by external barium. This potassium channel is controlled by G proteins.</text>
</comment>
<comment type="catalytic activity">
    <reaction evidence="6">
        <text>K(+)(in) = K(+)(out)</text>
        <dbReference type="Rhea" id="RHEA:29463"/>
        <dbReference type="ChEBI" id="CHEBI:29103"/>
    </reaction>
</comment>
<comment type="activity regulation">
    <text evidence="8">Heteromultimer composed of KCNJ3/GIRK1 and KCNJ5/GIRK4 is activated by phosphatidylinositol 4,5 biphosphate (PtdIns(4,5)P2).</text>
</comment>
<comment type="subunit">
    <text evidence="5 6">Associates with KCNJ3/GIRK1 or KCNJ6/GRIK2 to form a G-protein-activated heteromultimer pore-forming unit. The resulting inward current is much larger.</text>
</comment>
<comment type="subcellular location">
    <subcellularLocation>
        <location evidence="6">Membrane</location>
        <topology evidence="3">Multi-pass membrane protein</topology>
    </subcellularLocation>
</comment>
<comment type="tissue specificity">
    <text evidence="6 7">Most abundant in heart tissue where it is found predominantly in atria. Also found in brain, kidney, liver, spleen, lung and thymus.</text>
</comment>
<comment type="similarity">
    <text evidence="9">Belongs to the inward rectifier-type potassium channel (TC 1.A.2.1) family. KCNJ5 subfamily.</text>
</comment>
<reference key="1">
    <citation type="journal article" date="1994" name="Nature">
        <title>Cloning and functional expression of a rat heart KATP channel.</title>
        <authorList>
            <person name="Ashford M.L.J."/>
            <person name="Bond C.T."/>
            <person name="Blair T.A."/>
            <person name="Adelman J.P."/>
        </authorList>
    </citation>
    <scope>NUCLEOTIDE SEQUENCE [MRNA]</scope>
    <scope>RETRACTED PAPER</scope>
    <source>
        <strain>Sprague-Dawley</strain>
        <tissue>Heart</tissue>
    </source>
</reference>
<reference key="2">
    <citation type="journal article" date="1995" name="Nature">
        <authorList>
            <person name="Ashford M.L.J."/>
            <person name="Bond C.T."/>
            <person name="Blair T.A."/>
            <person name="Adelman J.P."/>
        </authorList>
    </citation>
    <scope>ERRATUM OF PUBMED:8047164</scope>
    <scope>RETRACTION NOTICE OF PUBMED:8047164</scope>
</reference>
<reference key="3">
    <citation type="journal article" date="1995" name="Nature">
        <title>The G-protein-gated atrial K+ channel IKACh is a heteromultimer of two inwardly rectifying K(+)-channel proteins.</title>
        <authorList>
            <person name="Krapivinsky G.B."/>
            <person name="Gordon E.A."/>
            <person name="Wickman K."/>
            <person name="Velimirovic B."/>
            <person name="Krapivinsky L.D."/>
            <person name="Clapham D.E."/>
        </authorList>
    </citation>
    <scope>NUCLEOTIDE SEQUENCE [MRNA]</scope>
    <scope>PROTEIN SEQUENCE OF 31-39 AND 333-341</scope>
    <scope>FUNCTION</scope>
    <scope>SUBCELLULAR LOCATION</scope>
    <scope>SUBUNIT</scope>
    <scope>TISSUE SPECIFICITY</scope>
    <scope>TRANSPORTER ACTIVITY</scope>
    <source>
        <strain>Sprague-Dawley</strain>
        <tissue>Neonatal heart atrium</tissue>
    </source>
</reference>
<reference key="4">
    <citation type="journal article" date="1995" name="J. Biol. Chem.">
        <title>Pancreatic islet cells express a family of inwardly rectifying K+ channel subunits which interact to form G-protein-activated channels.</title>
        <authorList>
            <person name="Ferrer J."/>
            <person name="Nichols C.G."/>
            <person name="Makhina E.N."/>
            <person name="Salkoff L."/>
            <person name="Bernstein J."/>
            <person name="Gerhard D."/>
            <person name="Wasson J."/>
            <person name="Ramanadham S."/>
            <person name="Permutt A."/>
        </authorList>
    </citation>
    <scope>NUCLEOTIDE SEQUENCE [MRNA]</scope>
    <scope>FUNCTION</scope>
    <scope>SUBUNIT</scope>
    <source>
        <tissue>Pancreatic islet</tissue>
    </source>
</reference>
<reference key="5">
    <citation type="journal article" date="1995" name="Recept. Channels">
        <title>Functional characterization and localization of a cardiac-type inwardly rectifying K+ channel.</title>
        <authorList>
            <person name="Iizuka M."/>
            <person name="Kubo Y."/>
            <person name="Tsunenari I."/>
            <person name="Pan C.X."/>
            <person name="Akiba I."/>
            <person name="Kono T."/>
        </authorList>
    </citation>
    <scope>NUCLEOTIDE SEQUENCE [MRNA]</scope>
    <scope>TISSUE SPECIFICITY</scope>
    <source>
        <strain>Sprague-Dawley</strain>
        <tissue>Heart</tissue>
    </source>
</reference>
<reference key="6">
    <citation type="journal article" date="2004" name="Genome Res.">
        <title>The status, quality, and expansion of the NIH full-length cDNA project: the Mammalian Gene Collection (MGC).</title>
        <authorList>
            <consortium name="The MGC Project Team"/>
        </authorList>
    </citation>
    <scope>NUCLEOTIDE SEQUENCE [LARGE SCALE MRNA]</scope>
    <source>
        <tissue>Heart</tissue>
    </source>
</reference>
<reference key="7">
    <citation type="journal article" date="1998" name="Nature">
        <title>Direct activation of inward rectifier potassium channels by PIP2 and its stabilization by Gbetagamma.</title>
        <authorList>
            <person name="Huang C.L."/>
            <person name="Feng S."/>
            <person name="Hilgemann D.W."/>
        </authorList>
    </citation>
    <scope>FUNCTION</scope>
    <scope>ACTIVITY REGULATION</scope>
</reference>
<protein>
    <recommendedName>
        <fullName>G protein-activated inward rectifier potassium channel 4</fullName>
        <shortName>GIRK-4</shortName>
    </recommendedName>
    <alternativeName>
        <fullName>Cardiac inward rectifier</fullName>
        <shortName>CIR</shortName>
    </alternativeName>
    <alternativeName>
        <fullName>Heart KATP channel</fullName>
    </alternativeName>
    <alternativeName>
        <fullName>Inward rectifier K(+) channel Kir3.4</fullName>
    </alternativeName>
    <alternativeName>
        <fullName>KATP-1</fullName>
    </alternativeName>
    <alternativeName>
        <fullName>Potassium channel, inwardly rectifying subfamily J member 5</fullName>
    </alternativeName>
</protein>
<sequence length="419" mass="47783">MAGDSRNAMNQDMEIGVTSQDHKKIPKQARDYIPIATDRTRLLPEGKKPRQRYMEKTGKCNVHHGNVQETYRYLSDLFTTLVDLKWRFNLLVFTMVYTITWLFFGFIWWLIAYVRGDLDHVGDQEWIPCVENLSGFVSAFLFSIETETTIGYGFRVITEKCPEGIILLLVQAILGSIVNAFMVGCMFVKISQPKKRAETLMFSNNAVISMRDEKLCLMFRVGDLRNSHIVEASIRAKLIKSRQTKEGEFIPLNQTDINVGFDTGDDRLFLVSPLIISHEINEKSPFWEMSRAQLEQEEFEVVVILEGMVEATGMTCQARSSYMDTEVLWGHRFTPVLTLEKGFYEVDYNTFHDTYETNTPSCCAKELAEMKRNGQLLQSLPSPPLLGGCAEAEKEAEAEHDEEEEPNGLSVSRATRGSM</sequence>
<name>KCNJ5_RAT</name>
<organism>
    <name type="scientific">Rattus norvegicus</name>
    <name type="common">Rat</name>
    <dbReference type="NCBI Taxonomy" id="10116"/>
    <lineage>
        <taxon>Eukaryota</taxon>
        <taxon>Metazoa</taxon>
        <taxon>Chordata</taxon>
        <taxon>Craniata</taxon>
        <taxon>Vertebrata</taxon>
        <taxon>Euteleostomi</taxon>
        <taxon>Mammalia</taxon>
        <taxon>Eutheria</taxon>
        <taxon>Euarchontoglires</taxon>
        <taxon>Glires</taxon>
        <taxon>Rodentia</taxon>
        <taxon>Myomorpha</taxon>
        <taxon>Muroidea</taxon>
        <taxon>Muridae</taxon>
        <taxon>Murinae</taxon>
        <taxon>Rattus</taxon>
    </lineage>
</organism>
<feature type="chain" id="PRO_0000154937" description="G protein-activated inward rectifier potassium channel 4">
    <location>
        <begin position="1"/>
        <end position="419"/>
    </location>
</feature>
<feature type="topological domain" description="Cytoplasmic" evidence="1">
    <location>
        <begin position="1"/>
        <end position="86"/>
    </location>
</feature>
<feature type="transmembrane region" description="Helical; Name=M1" evidence="1">
    <location>
        <begin position="87"/>
        <end position="111"/>
    </location>
</feature>
<feature type="topological domain" description="Extracellular" evidence="1">
    <location>
        <begin position="112"/>
        <end position="135"/>
    </location>
</feature>
<feature type="intramembrane region" description="Helical; Pore-forming; Name=H5" evidence="1">
    <location>
        <begin position="136"/>
        <end position="147"/>
    </location>
</feature>
<feature type="intramembrane region" description="Pore-forming" evidence="1">
    <location>
        <begin position="148"/>
        <end position="154"/>
    </location>
</feature>
<feature type="topological domain" description="Extracellular" evidence="1">
    <location>
        <begin position="155"/>
        <end position="163"/>
    </location>
</feature>
<feature type="transmembrane region" description="Helical; Name=M2" evidence="1">
    <location>
        <begin position="164"/>
        <end position="185"/>
    </location>
</feature>
<feature type="topological domain" description="Cytoplasmic" evidence="1">
    <location>
        <begin position="186"/>
        <end position="419"/>
    </location>
</feature>
<feature type="region of interest" description="Disordered" evidence="4">
    <location>
        <begin position="380"/>
        <end position="419"/>
    </location>
</feature>
<feature type="short sequence motif" description="Selectivity filter" evidence="1">
    <location>
        <begin position="149"/>
        <end position="154"/>
    </location>
</feature>
<feature type="compositionally biased region" description="Low complexity" evidence="4">
    <location>
        <begin position="380"/>
        <end position="390"/>
    </location>
</feature>
<feature type="compositionally biased region" description="Polar residues" evidence="4">
    <location>
        <begin position="409"/>
        <end position="419"/>
    </location>
</feature>
<feature type="site" description="Role in the control of polyamine-mediated channel gating and in the blocking by intracellular magnesium" evidence="1">
    <location>
        <position position="179"/>
    </location>
</feature>
<feature type="modified residue" description="Phosphoserine" evidence="2">
    <location>
        <position position="5"/>
    </location>
</feature>
<feature type="sequence conflict" description="In Ref. 1; CAA58567." evidence="9" ref="1">
    <original>V</original>
    <variation>I</variation>
    <location>
        <position position="188"/>
    </location>
</feature>
<feature type="sequence conflict" description="In Ref. 1; CAA58567." evidence="9" ref="1">
    <original>Q</original>
    <variation>E</variation>
    <location>
        <position position="375"/>
    </location>
</feature>
<dbReference type="EMBL" id="X83584">
    <property type="protein sequence ID" value="CAA58567.1"/>
    <property type="molecule type" value="mRNA"/>
</dbReference>
<dbReference type="EMBL" id="L35771">
    <property type="protein sequence ID" value="AAC42048.1"/>
    <property type="molecule type" value="mRNA"/>
</dbReference>
<dbReference type="EMBL" id="D50135">
    <property type="protein sequence ID" value="BAA08815.1"/>
    <property type="molecule type" value="mRNA"/>
</dbReference>
<dbReference type="EMBL" id="BC087022">
    <property type="protein sequence ID" value="AAH87022.1"/>
    <property type="molecule type" value="mRNA"/>
</dbReference>
<dbReference type="PIR" id="S48077">
    <property type="entry name" value="S48077"/>
</dbReference>
<dbReference type="RefSeq" id="NP_058993.1">
    <property type="nucleotide sequence ID" value="NM_017297.2"/>
</dbReference>
<dbReference type="RefSeq" id="XP_038936904.1">
    <property type="nucleotide sequence ID" value="XM_039080976.2"/>
</dbReference>
<dbReference type="RefSeq" id="XP_038936905.1">
    <property type="nucleotide sequence ID" value="XM_039080977.2"/>
</dbReference>
<dbReference type="RefSeq" id="XP_063121106.1">
    <property type="nucleotide sequence ID" value="XM_063265036.1"/>
</dbReference>
<dbReference type="SMR" id="P48548"/>
<dbReference type="ComplexPortal" id="CPX-3276">
    <property type="entry name" value="I(KACh) inward rectifier potassium channel complex"/>
</dbReference>
<dbReference type="FunCoup" id="P48548">
    <property type="interactions" value="218"/>
</dbReference>
<dbReference type="STRING" id="10116.ENSRNOP00000048134"/>
<dbReference type="ChEMBL" id="CHEMBL3714708"/>
<dbReference type="GuidetoPHARMACOLOGY" id="437"/>
<dbReference type="iPTMnet" id="P48548"/>
<dbReference type="PhosphoSitePlus" id="P48548"/>
<dbReference type="PaxDb" id="10116-ENSRNOP00000048134"/>
<dbReference type="DNASU" id="29713"/>
<dbReference type="Ensembl" id="ENSRNOT00000041038.6">
    <property type="protein sequence ID" value="ENSRNOP00000048134.5"/>
    <property type="gene ID" value="ENSRNOG00000033796.6"/>
</dbReference>
<dbReference type="GeneID" id="29713"/>
<dbReference type="KEGG" id="rno:29713"/>
<dbReference type="UCSC" id="RGD:61971">
    <property type="organism name" value="rat"/>
</dbReference>
<dbReference type="AGR" id="RGD:61971"/>
<dbReference type="CTD" id="3762"/>
<dbReference type="RGD" id="61971">
    <property type="gene designation" value="Kcnj5"/>
</dbReference>
<dbReference type="eggNOG" id="KOG3827">
    <property type="taxonomic scope" value="Eukaryota"/>
</dbReference>
<dbReference type="GeneTree" id="ENSGT01080000257365"/>
<dbReference type="HOGENOM" id="CLU_022738_11_0_1"/>
<dbReference type="InParanoid" id="P48548"/>
<dbReference type="PhylomeDB" id="P48548"/>
<dbReference type="Reactome" id="R-RNO-1296041">
    <property type="pathway name" value="Activation of G protein gated Potassium channels"/>
</dbReference>
<dbReference type="Reactome" id="R-RNO-997272">
    <property type="pathway name" value="Inhibition of voltage gated Ca2+ channels via Gbeta/gamma subunits"/>
</dbReference>
<dbReference type="PRO" id="PR:P48548"/>
<dbReference type="Proteomes" id="UP000002494">
    <property type="component" value="Chromosome 8"/>
</dbReference>
<dbReference type="Bgee" id="ENSRNOG00000033796">
    <property type="expression patterns" value="Expressed in heart and 12 other cell types or tissues"/>
</dbReference>
<dbReference type="GO" id="GO:0009897">
    <property type="term" value="C:external side of plasma membrane"/>
    <property type="evidence" value="ECO:0000314"/>
    <property type="project" value="RGD"/>
</dbReference>
<dbReference type="GO" id="GO:1990566">
    <property type="term" value="C:I(KACh) inward rectifier potassium channel complex"/>
    <property type="evidence" value="ECO:0000266"/>
    <property type="project" value="ComplexPortal"/>
</dbReference>
<dbReference type="GO" id="GO:0005886">
    <property type="term" value="C:plasma membrane"/>
    <property type="evidence" value="ECO:0000318"/>
    <property type="project" value="GO_Central"/>
</dbReference>
<dbReference type="GO" id="GO:0030315">
    <property type="term" value="C:T-tubule"/>
    <property type="evidence" value="ECO:0000314"/>
    <property type="project" value="RGD"/>
</dbReference>
<dbReference type="GO" id="GO:0008076">
    <property type="term" value="C:voltage-gated potassium channel complex"/>
    <property type="evidence" value="ECO:0000266"/>
    <property type="project" value="RGD"/>
</dbReference>
<dbReference type="GO" id="GO:0015467">
    <property type="term" value="F:G-protein activated inward rectifier potassium channel activity"/>
    <property type="evidence" value="ECO:0000266"/>
    <property type="project" value="RGD"/>
</dbReference>
<dbReference type="GO" id="GO:0005242">
    <property type="term" value="F:inward rectifier potassium channel activity"/>
    <property type="evidence" value="ECO:0000314"/>
    <property type="project" value="UniProtKB"/>
</dbReference>
<dbReference type="GO" id="GO:0086089">
    <property type="term" value="F:voltage-gated potassium channel activity involved in atrial cardiac muscle cell action potential repolarization"/>
    <property type="evidence" value="ECO:0000266"/>
    <property type="project" value="RGD"/>
</dbReference>
<dbReference type="GO" id="GO:0098914">
    <property type="term" value="P:membrane repolarization during atrial cardiac muscle cell action potential"/>
    <property type="evidence" value="ECO:0000266"/>
    <property type="project" value="RGD"/>
</dbReference>
<dbReference type="GO" id="GO:1990573">
    <property type="term" value="P:potassium ion import across plasma membrane"/>
    <property type="evidence" value="ECO:0000266"/>
    <property type="project" value="RGD"/>
</dbReference>
<dbReference type="GO" id="GO:0071805">
    <property type="term" value="P:potassium ion transmembrane transport"/>
    <property type="evidence" value="ECO:0000303"/>
    <property type="project" value="ComplexPortal"/>
</dbReference>
<dbReference type="GO" id="GO:0086091">
    <property type="term" value="P:regulation of heart rate by cardiac conduction"/>
    <property type="evidence" value="ECO:0000266"/>
    <property type="project" value="RGD"/>
</dbReference>
<dbReference type="GO" id="GO:0034765">
    <property type="term" value="P:regulation of monoatomic ion transmembrane transport"/>
    <property type="evidence" value="ECO:0000318"/>
    <property type="project" value="GO_Central"/>
</dbReference>
<dbReference type="FunFam" id="1.10.287.70:FF:000019">
    <property type="entry name" value="G protein-activated inward rectifier potassium channel 1"/>
    <property type="match status" value="1"/>
</dbReference>
<dbReference type="FunFam" id="2.60.40.1400:FF:000005">
    <property type="entry name" value="G protein-activated inward rectifier potassium channel 2"/>
    <property type="match status" value="1"/>
</dbReference>
<dbReference type="Gene3D" id="1.10.287.70">
    <property type="match status" value="1"/>
</dbReference>
<dbReference type="Gene3D" id="2.60.40.1400">
    <property type="entry name" value="G protein-activated inward rectifier potassium channel 1"/>
    <property type="match status" value="1"/>
</dbReference>
<dbReference type="InterPro" id="IPR014756">
    <property type="entry name" value="Ig_E-set"/>
</dbReference>
<dbReference type="InterPro" id="IPR041647">
    <property type="entry name" value="IRK_C"/>
</dbReference>
<dbReference type="InterPro" id="IPR016449">
    <property type="entry name" value="K_chnl_inward-rec_Kir"/>
</dbReference>
<dbReference type="InterPro" id="IPR003277">
    <property type="entry name" value="K_chnl_inward-rec_Kir3.4"/>
</dbReference>
<dbReference type="InterPro" id="IPR013518">
    <property type="entry name" value="K_chnl_inward-rec_Kir_cyto"/>
</dbReference>
<dbReference type="InterPro" id="IPR040445">
    <property type="entry name" value="Kir_TM"/>
</dbReference>
<dbReference type="PANTHER" id="PTHR11767:SF52">
    <property type="entry name" value="G PROTEIN-ACTIVATED INWARD RECTIFIER POTASSIUM CHANNEL 4"/>
    <property type="match status" value="1"/>
</dbReference>
<dbReference type="PANTHER" id="PTHR11767">
    <property type="entry name" value="INWARD RECTIFIER POTASSIUM CHANNEL"/>
    <property type="match status" value="1"/>
</dbReference>
<dbReference type="Pfam" id="PF01007">
    <property type="entry name" value="IRK"/>
    <property type="match status" value="1"/>
</dbReference>
<dbReference type="Pfam" id="PF17655">
    <property type="entry name" value="IRK_C"/>
    <property type="match status" value="1"/>
</dbReference>
<dbReference type="PIRSF" id="PIRSF005465">
    <property type="entry name" value="GIRK_kir"/>
    <property type="match status" value="1"/>
</dbReference>
<dbReference type="PRINTS" id="PR01330">
    <property type="entry name" value="KIR34CHANNEL"/>
</dbReference>
<dbReference type="PRINTS" id="PR01320">
    <property type="entry name" value="KIRCHANNEL"/>
</dbReference>
<dbReference type="SUPFAM" id="SSF81296">
    <property type="entry name" value="E set domains"/>
    <property type="match status" value="1"/>
</dbReference>
<dbReference type="SUPFAM" id="SSF81324">
    <property type="entry name" value="Voltage-gated potassium channels"/>
    <property type="match status" value="1"/>
</dbReference>
<evidence type="ECO:0000250" key="1"/>
<evidence type="ECO:0000250" key="2">
    <source>
        <dbReference type="UniProtKB" id="P48542"/>
    </source>
</evidence>
<evidence type="ECO:0000255" key="3"/>
<evidence type="ECO:0000256" key="4">
    <source>
        <dbReference type="SAM" id="MobiDB-lite"/>
    </source>
</evidence>
<evidence type="ECO:0000269" key="5">
    <source>
    </source>
</evidence>
<evidence type="ECO:0000269" key="6">
    <source>
    </source>
</evidence>
<evidence type="ECO:0000269" key="7">
    <source>
    </source>
</evidence>
<evidence type="ECO:0000269" key="8">
    <source>
    </source>
</evidence>
<evidence type="ECO:0000305" key="9"/>